<keyword id="KW-0472">Membrane</keyword>
<keyword id="KW-1185">Reference proteome</keyword>
<keyword id="KW-0812">Transmembrane</keyword>
<keyword id="KW-1133">Transmembrane helix</keyword>
<keyword id="KW-0813">Transport</keyword>
<evidence type="ECO:0000255" key="1"/>
<evidence type="ECO:0000305" key="2"/>
<comment type="subcellular location">
    <subcellularLocation>
        <location evidence="2">Membrane</location>
        <topology evidence="2">Multi-pass membrane protein</topology>
    </subcellularLocation>
</comment>
<comment type="similarity">
    <text evidence="2">Belongs to the purine permeases (TC 2.A.7.14) family.</text>
</comment>
<comment type="sequence caution" evidence="2">
    <conflict type="erroneous initiation">
        <sequence resource="EMBL-CDS" id="AAD03383"/>
    </conflict>
</comment>
<gene>
    <name type="primary">PUP5</name>
    <name type="synonym">PUP11</name>
    <name type="ordered locus">At2g24220</name>
    <name type="ORF">F27D4.13</name>
</gene>
<reference key="1">
    <citation type="journal article" date="1999" name="Nature">
        <title>Sequence and analysis of chromosome 2 of the plant Arabidopsis thaliana.</title>
        <authorList>
            <person name="Lin X."/>
            <person name="Kaul S."/>
            <person name="Rounsley S.D."/>
            <person name="Shea T.P."/>
            <person name="Benito M.-I."/>
            <person name="Town C.D."/>
            <person name="Fujii C.Y."/>
            <person name="Mason T.M."/>
            <person name="Bowman C.L."/>
            <person name="Barnstead M.E."/>
            <person name="Feldblyum T.V."/>
            <person name="Buell C.R."/>
            <person name="Ketchum K.A."/>
            <person name="Lee J.J."/>
            <person name="Ronning C.M."/>
            <person name="Koo H.L."/>
            <person name="Moffat K.S."/>
            <person name="Cronin L.A."/>
            <person name="Shen M."/>
            <person name="Pai G."/>
            <person name="Van Aken S."/>
            <person name="Umayam L."/>
            <person name="Tallon L.J."/>
            <person name="Gill J.E."/>
            <person name="Adams M.D."/>
            <person name="Carrera A.J."/>
            <person name="Creasy T.H."/>
            <person name="Goodman H.M."/>
            <person name="Somerville C.R."/>
            <person name="Copenhaver G.P."/>
            <person name="Preuss D."/>
            <person name="Nierman W.C."/>
            <person name="White O."/>
            <person name="Eisen J.A."/>
            <person name="Salzberg S.L."/>
            <person name="Fraser C.M."/>
            <person name="Venter J.C."/>
        </authorList>
    </citation>
    <scope>NUCLEOTIDE SEQUENCE [LARGE SCALE GENOMIC DNA]</scope>
    <source>
        <strain>cv. Columbia</strain>
    </source>
</reference>
<reference key="2">
    <citation type="journal article" date="2017" name="Plant J.">
        <title>Araport11: a complete reannotation of the Arabidopsis thaliana reference genome.</title>
        <authorList>
            <person name="Cheng C.Y."/>
            <person name="Krishnakumar V."/>
            <person name="Chan A.P."/>
            <person name="Thibaud-Nissen F."/>
            <person name="Schobel S."/>
            <person name="Town C.D."/>
        </authorList>
    </citation>
    <scope>GENOME REANNOTATION</scope>
    <source>
        <strain>cv. Columbia</strain>
    </source>
</reference>
<reference key="3">
    <citation type="journal article" date="2000" name="Plant Cell">
        <title>A new family of high-affinity transporters for adenine, cytosine, and purine derivatives in Arabidopsis.</title>
        <authorList>
            <person name="Gillissen B."/>
            <person name="Buerkle L."/>
            <person name="Andre B."/>
            <person name="Kuehn C."/>
            <person name="Rentsch D."/>
            <person name="Brandl B."/>
            <person name="Frommer W.B."/>
        </authorList>
    </citation>
    <scope>GENE FAMILY</scope>
    <scope>NOMENCLATURE</scope>
</reference>
<sequence length="361" mass="39174">MDETTERPTVSFSYSNWISNIKKSTREAYEAKPFSHWILLFFSGAAMLIAFPASSLLSRLYFSNGGKSKWIISWVAVAGWPITCLILLPTYIFQKIKPTPLNTKLVLSYVVLGFLSAADNLMYAYAYAYLPASTSSLLASSSLAFSALFGYLIVKNPLNASVINSIVVITGAMAIIALDSSSDRYSYISNSQYFAGFFWDIMGSALHGLIFALSELLFVKLLGRRSFHVALEQQVMVSLTAFAFTTIGMVVSNDFQGMSHEAKSFKGGESLYTQVLVWSAVTFQLGVLGATAVLFLASTVMAGVLNAVRVPITSVAAVILMHDPMSGFKILSLVLTFWGFSSYIYGSSSSNSSTQASSSSS</sequence>
<organism>
    <name type="scientific">Arabidopsis thaliana</name>
    <name type="common">Mouse-ear cress</name>
    <dbReference type="NCBI Taxonomy" id="3702"/>
    <lineage>
        <taxon>Eukaryota</taxon>
        <taxon>Viridiplantae</taxon>
        <taxon>Streptophyta</taxon>
        <taxon>Embryophyta</taxon>
        <taxon>Tracheophyta</taxon>
        <taxon>Spermatophyta</taxon>
        <taxon>Magnoliopsida</taxon>
        <taxon>eudicotyledons</taxon>
        <taxon>Gunneridae</taxon>
        <taxon>Pentapetalae</taxon>
        <taxon>rosids</taxon>
        <taxon>malvids</taxon>
        <taxon>Brassicales</taxon>
        <taxon>Brassicaceae</taxon>
        <taxon>Camelineae</taxon>
        <taxon>Arabidopsis</taxon>
    </lineage>
</organism>
<feature type="chain" id="PRO_0000317392" description="Probable purine permease 5">
    <location>
        <begin position="1"/>
        <end position="361"/>
    </location>
</feature>
<feature type="transmembrane region" description="Helical" evidence="1">
    <location>
        <begin position="37"/>
        <end position="57"/>
    </location>
</feature>
<feature type="transmembrane region" description="Helical" evidence="1">
    <location>
        <begin position="70"/>
        <end position="90"/>
    </location>
</feature>
<feature type="transmembrane region" description="Helical" evidence="1">
    <location>
        <begin position="105"/>
        <end position="125"/>
    </location>
</feature>
<feature type="transmembrane region" description="Helical" evidence="1">
    <location>
        <begin position="134"/>
        <end position="154"/>
    </location>
</feature>
<feature type="transmembrane region" description="Helical" evidence="1">
    <location>
        <begin position="158"/>
        <end position="178"/>
    </location>
</feature>
<feature type="transmembrane region" description="Helical" evidence="1">
    <location>
        <begin position="193"/>
        <end position="213"/>
    </location>
</feature>
<feature type="transmembrane region" description="Helical" evidence="1">
    <location>
        <begin position="235"/>
        <end position="255"/>
    </location>
</feature>
<feature type="transmembrane region" description="Helical" evidence="1">
    <location>
        <begin position="285"/>
        <end position="305"/>
    </location>
</feature>
<feature type="transmembrane region" description="Helical" evidence="1">
    <location>
        <begin position="315"/>
        <end position="335"/>
    </location>
</feature>
<feature type="domain" description="EamA">
    <location>
        <begin position="75"/>
        <end position="178"/>
    </location>
</feature>
<protein>
    <recommendedName>
        <fullName>Probable purine permease 5</fullName>
        <shortName>AtPUP5</shortName>
    </recommendedName>
</protein>
<proteinExistence type="inferred from homology"/>
<accession>Q9ZUH3</accession>
<name>PUP5_ARATH</name>
<dbReference type="EMBL" id="AC005967">
    <property type="protein sequence ID" value="AAD03383.1"/>
    <property type="status" value="ALT_INIT"/>
    <property type="molecule type" value="Genomic_DNA"/>
</dbReference>
<dbReference type="EMBL" id="CP002685">
    <property type="protein sequence ID" value="AEC07544.1"/>
    <property type="molecule type" value="Genomic_DNA"/>
</dbReference>
<dbReference type="PIR" id="A84634">
    <property type="entry name" value="A84634"/>
</dbReference>
<dbReference type="RefSeq" id="NP_179999.2">
    <property type="nucleotide sequence ID" value="NM_127983.3"/>
</dbReference>
<dbReference type="SMR" id="Q9ZUH3"/>
<dbReference type="BioGRID" id="2308">
    <property type="interactions" value="11"/>
</dbReference>
<dbReference type="FunCoup" id="Q9ZUH3">
    <property type="interactions" value="10"/>
</dbReference>
<dbReference type="IntAct" id="Q9ZUH3">
    <property type="interactions" value="10"/>
</dbReference>
<dbReference type="STRING" id="3702.Q9ZUH3"/>
<dbReference type="PaxDb" id="3702-AT2G24220.2"/>
<dbReference type="EnsemblPlants" id="AT2G24220.1">
    <property type="protein sequence ID" value="AT2G24220.1"/>
    <property type="gene ID" value="AT2G24220"/>
</dbReference>
<dbReference type="GeneID" id="816956"/>
<dbReference type="Gramene" id="AT2G24220.1">
    <property type="protein sequence ID" value="AT2G24220.1"/>
    <property type="gene ID" value="AT2G24220"/>
</dbReference>
<dbReference type="KEGG" id="ath:AT2G24220"/>
<dbReference type="Araport" id="AT2G24220"/>
<dbReference type="TAIR" id="AT2G24220">
    <property type="gene designation" value="PUP5"/>
</dbReference>
<dbReference type="eggNOG" id="ENOG502QT64">
    <property type="taxonomic scope" value="Eukaryota"/>
</dbReference>
<dbReference type="HOGENOM" id="CLU_043459_1_1_1"/>
<dbReference type="InParanoid" id="Q9ZUH3"/>
<dbReference type="OrthoDB" id="1912676at2759"/>
<dbReference type="PhylomeDB" id="Q9ZUH3"/>
<dbReference type="PRO" id="PR:Q9ZUH3"/>
<dbReference type="Proteomes" id="UP000006548">
    <property type="component" value="Chromosome 2"/>
</dbReference>
<dbReference type="ExpressionAtlas" id="Q9ZUH3">
    <property type="expression patterns" value="baseline and differential"/>
</dbReference>
<dbReference type="GO" id="GO:0016020">
    <property type="term" value="C:membrane"/>
    <property type="evidence" value="ECO:0000304"/>
    <property type="project" value="TAIR"/>
</dbReference>
<dbReference type="GO" id="GO:0005345">
    <property type="term" value="F:purine nucleobase transmembrane transporter activity"/>
    <property type="evidence" value="ECO:0000304"/>
    <property type="project" value="TAIR"/>
</dbReference>
<dbReference type="GO" id="GO:0015211">
    <property type="term" value="F:purine nucleoside transmembrane transporter activity"/>
    <property type="evidence" value="ECO:0007669"/>
    <property type="project" value="InterPro"/>
</dbReference>
<dbReference type="GO" id="GO:0006863">
    <property type="term" value="P:purine nucleobase transport"/>
    <property type="evidence" value="ECO:0000304"/>
    <property type="project" value="TAIR"/>
</dbReference>
<dbReference type="InterPro" id="IPR030182">
    <property type="entry name" value="PUP_plant"/>
</dbReference>
<dbReference type="PANTHER" id="PTHR31376">
    <property type="entry name" value="OS09G0467300 PROTEIN-RELATED"/>
    <property type="match status" value="1"/>
</dbReference>
<dbReference type="PANTHER" id="PTHR31376:SF10">
    <property type="entry name" value="PURINE PERMEASE 5-RELATED"/>
    <property type="match status" value="1"/>
</dbReference>
<dbReference type="Pfam" id="PF16913">
    <property type="entry name" value="PUNUT"/>
    <property type="match status" value="1"/>
</dbReference>
<dbReference type="SUPFAM" id="SSF103481">
    <property type="entry name" value="Multidrug resistance efflux transporter EmrE"/>
    <property type="match status" value="1"/>
</dbReference>